<dbReference type="EC" id="2.5.1.141" evidence="1"/>
<dbReference type="EMBL" id="CP001074">
    <property type="protein sequence ID" value="ACE90034.1"/>
    <property type="molecule type" value="Genomic_DNA"/>
</dbReference>
<dbReference type="SMR" id="B3PSB2"/>
<dbReference type="KEGG" id="rec:RHECIAT_CH0001049"/>
<dbReference type="eggNOG" id="COG0109">
    <property type="taxonomic scope" value="Bacteria"/>
</dbReference>
<dbReference type="HOGENOM" id="CLU_029631_0_2_5"/>
<dbReference type="UniPathway" id="UPA00834">
    <property type="reaction ID" value="UER00712"/>
</dbReference>
<dbReference type="Proteomes" id="UP000008817">
    <property type="component" value="Chromosome"/>
</dbReference>
<dbReference type="GO" id="GO:0005886">
    <property type="term" value="C:plasma membrane"/>
    <property type="evidence" value="ECO:0007669"/>
    <property type="project" value="UniProtKB-SubCell"/>
</dbReference>
<dbReference type="GO" id="GO:0008495">
    <property type="term" value="F:protoheme IX farnesyltransferase activity"/>
    <property type="evidence" value="ECO:0007669"/>
    <property type="project" value="UniProtKB-UniRule"/>
</dbReference>
<dbReference type="GO" id="GO:0048034">
    <property type="term" value="P:heme O biosynthetic process"/>
    <property type="evidence" value="ECO:0007669"/>
    <property type="project" value="UniProtKB-UniRule"/>
</dbReference>
<dbReference type="CDD" id="cd13957">
    <property type="entry name" value="PT_UbiA_Cox10"/>
    <property type="match status" value="1"/>
</dbReference>
<dbReference type="FunFam" id="1.10.357.140:FF:000001">
    <property type="entry name" value="Protoheme IX farnesyltransferase"/>
    <property type="match status" value="1"/>
</dbReference>
<dbReference type="Gene3D" id="1.10.357.140">
    <property type="entry name" value="UbiA prenyltransferase"/>
    <property type="match status" value="1"/>
</dbReference>
<dbReference type="HAMAP" id="MF_00154">
    <property type="entry name" value="CyoE_CtaB"/>
    <property type="match status" value="1"/>
</dbReference>
<dbReference type="InterPro" id="IPR006369">
    <property type="entry name" value="Protohaem_IX_farnesylTrfase"/>
</dbReference>
<dbReference type="InterPro" id="IPR000537">
    <property type="entry name" value="UbiA_prenyltransferase"/>
</dbReference>
<dbReference type="InterPro" id="IPR030470">
    <property type="entry name" value="UbiA_prenylTrfase_CS"/>
</dbReference>
<dbReference type="InterPro" id="IPR044878">
    <property type="entry name" value="UbiA_sf"/>
</dbReference>
<dbReference type="NCBIfam" id="TIGR01473">
    <property type="entry name" value="cyoE_ctaB"/>
    <property type="match status" value="1"/>
</dbReference>
<dbReference type="NCBIfam" id="NF003349">
    <property type="entry name" value="PRK04375.1-2"/>
    <property type="match status" value="1"/>
</dbReference>
<dbReference type="PANTHER" id="PTHR43448:SF7">
    <property type="entry name" value="4-HYDROXYBENZOATE SOLANESYLTRANSFERASE"/>
    <property type="match status" value="1"/>
</dbReference>
<dbReference type="PANTHER" id="PTHR43448">
    <property type="entry name" value="PROTOHEME IX FARNESYLTRANSFERASE, MITOCHONDRIAL"/>
    <property type="match status" value="1"/>
</dbReference>
<dbReference type="Pfam" id="PF01040">
    <property type="entry name" value="UbiA"/>
    <property type="match status" value="1"/>
</dbReference>
<dbReference type="PROSITE" id="PS00943">
    <property type="entry name" value="UBIA"/>
    <property type="match status" value="1"/>
</dbReference>
<accession>B3PSB2</accession>
<gene>
    <name evidence="1" type="primary">ctaB</name>
    <name type="ordered locus">RHECIAT_CH0001049</name>
</gene>
<evidence type="ECO:0000255" key="1">
    <source>
        <dbReference type="HAMAP-Rule" id="MF_00154"/>
    </source>
</evidence>
<comment type="function">
    <text evidence="1">Converts heme B (protoheme IX) to heme O by substitution of the vinyl group on carbon 2 of heme B porphyrin ring with a hydroxyethyl farnesyl side group.</text>
</comment>
<comment type="catalytic activity">
    <reaction evidence="1">
        <text>heme b + (2E,6E)-farnesyl diphosphate + H2O = Fe(II)-heme o + diphosphate</text>
        <dbReference type="Rhea" id="RHEA:28070"/>
        <dbReference type="ChEBI" id="CHEBI:15377"/>
        <dbReference type="ChEBI" id="CHEBI:33019"/>
        <dbReference type="ChEBI" id="CHEBI:60344"/>
        <dbReference type="ChEBI" id="CHEBI:60530"/>
        <dbReference type="ChEBI" id="CHEBI:175763"/>
        <dbReference type="EC" id="2.5.1.141"/>
    </reaction>
</comment>
<comment type="pathway">
    <text evidence="1">Porphyrin-containing compound metabolism; heme O biosynthesis; heme O from protoheme: step 1/1.</text>
</comment>
<comment type="subcellular location">
    <subcellularLocation>
        <location evidence="1">Cell inner membrane</location>
        <topology evidence="1">Multi-pass membrane protein</topology>
    </subcellularLocation>
</comment>
<comment type="miscellaneous">
    <text evidence="1">Carbon 2 of the heme B porphyrin ring is defined according to the Fischer nomenclature.</text>
</comment>
<comment type="similarity">
    <text evidence="1">Belongs to the UbiA prenyltransferase family. Protoheme IX farnesyltransferase subfamily.</text>
</comment>
<proteinExistence type="inferred from homology"/>
<sequence>MTVIDNHEALAKDGELSEASARDYFELLKPRVMSLVVFTAFAGLVLAPGQINPVLGLIAILCIAVGAGASGALNMWYDADIDAIMSRTAKRPIPAGRIAPSEALAFGLVLSCFSVAILGLAVNWLSAGILAFTIFFYAVIYTMWLKRSTPQNIVIGGAAGAFPPMIGWACVTNSVTIESTVLFLIIFLWTPAHFWALALFKMRDYEAVGVPMLPNVSGERVTKHQIVAYAVLTAICAVLPSYLGFASFAYGLVAAALGAIFIYCSIAVWRMPDGDLKMIPAKKLFAFSIFYLFAIFSALMIDRLAAMLVSYAGGSL</sequence>
<name>COXX_RHIE6</name>
<reference key="1">
    <citation type="journal article" date="2010" name="Appl. Environ. Microbiol.">
        <title>Conserved symbiotic plasmid DNA sequences in the multireplicon pangenomic structure of Rhizobium etli.</title>
        <authorList>
            <person name="Gonzalez V."/>
            <person name="Acosta J.L."/>
            <person name="Santamaria R.I."/>
            <person name="Bustos P."/>
            <person name="Fernandez J.L."/>
            <person name="Hernandez Gonzalez I.L."/>
            <person name="Diaz R."/>
            <person name="Flores M."/>
            <person name="Palacios R."/>
            <person name="Mora J."/>
            <person name="Davila G."/>
        </authorList>
    </citation>
    <scope>NUCLEOTIDE SEQUENCE [LARGE SCALE GENOMIC DNA]</scope>
    <source>
        <strain>CIAT 652</strain>
    </source>
</reference>
<protein>
    <recommendedName>
        <fullName evidence="1">Protoheme IX farnesyltransferase</fullName>
        <ecNumber evidence="1">2.5.1.141</ecNumber>
    </recommendedName>
    <alternativeName>
        <fullName evidence="1">Heme B farnesyltransferase</fullName>
    </alternativeName>
    <alternativeName>
        <fullName evidence="1">Heme O synthase</fullName>
    </alternativeName>
</protein>
<keyword id="KW-0997">Cell inner membrane</keyword>
<keyword id="KW-1003">Cell membrane</keyword>
<keyword id="KW-0350">Heme biosynthesis</keyword>
<keyword id="KW-0472">Membrane</keyword>
<keyword id="KW-0808">Transferase</keyword>
<keyword id="KW-0812">Transmembrane</keyword>
<keyword id="KW-1133">Transmembrane helix</keyword>
<feature type="chain" id="PRO_1000096925" description="Protoheme IX farnesyltransferase">
    <location>
        <begin position="1"/>
        <end position="316"/>
    </location>
</feature>
<feature type="transmembrane region" description="Helical" evidence="1">
    <location>
        <begin position="32"/>
        <end position="52"/>
    </location>
</feature>
<feature type="transmembrane region" description="Helical" evidence="1">
    <location>
        <begin position="53"/>
        <end position="73"/>
    </location>
</feature>
<feature type="transmembrane region" description="Helical" evidence="1">
    <location>
        <begin position="93"/>
        <end position="113"/>
    </location>
</feature>
<feature type="transmembrane region" description="Helical" evidence="1">
    <location>
        <begin position="116"/>
        <end position="136"/>
    </location>
</feature>
<feature type="transmembrane region" description="Helical" evidence="1">
    <location>
        <begin position="152"/>
        <end position="172"/>
    </location>
</feature>
<feature type="transmembrane region" description="Helical" evidence="1">
    <location>
        <begin position="180"/>
        <end position="200"/>
    </location>
</feature>
<feature type="transmembrane region" description="Helical" evidence="1">
    <location>
        <begin position="226"/>
        <end position="246"/>
    </location>
</feature>
<feature type="transmembrane region" description="Helical" evidence="1">
    <location>
        <begin position="248"/>
        <end position="268"/>
    </location>
</feature>
<feature type="transmembrane region" description="Helical" evidence="1">
    <location>
        <begin position="289"/>
        <end position="309"/>
    </location>
</feature>
<organism>
    <name type="scientific">Rhizobium etli (strain CIAT 652)</name>
    <dbReference type="NCBI Taxonomy" id="491916"/>
    <lineage>
        <taxon>Bacteria</taxon>
        <taxon>Pseudomonadati</taxon>
        <taxon>Pseudomonadota</taxon>
        <taxon>Alphaproteobacteria</taxon>
        <taxon>Hyphomicrobiales</taxon>
        <taxon>Rhizobiaceae</taxon>
        <taxon>Rhizobium/Agrobacterium group</taxon>
        <taxon>Rhizobium</taxon>
    </lineage>
</organism>